<feature type="chain" id="PRO_1000203189" description="Tryptophan synthase beta chain">
    <location>
        <begin position="1"/>
        <end position="406"/>
    </location>
</feature>
<feature type="modified residue" description="N6-(pyridoxal phosphate)lysine" evidence="1">
    <location>
        <position position="95"/>
    </location>
</feature>
<sequence length="406" mass="44417">MTETSYRTGPDEKGLFGRFGGQYVAETLMPLILDLAEEYERAKVDPAFLEELAYFQRDYVGRPSPLYFAERLTEHCGGAKIYLKREELNHTGAHKINNCIGQILLARRMGKQRIIAETGAGMHGVATATVAARFGLQCVIYMGTTDIDRQQANVFRMKLLGAEVIPVTAGTGTLKDAMNEALRDWVTNVETTFYLIGTVAGPHPYPAMVRDFQAVIGKETREQLIEKEGRLPDSLVACIGGGSNAMGLFHPFLDEPGVKIVGVEAAGHGIETGKHAASLNGGVPGVLHGNRTFLLQDADGQIIDAHSISAGLDYPGIGPEHAWLHDIGRVEYSSITDHEALQAFHTCCRLEGIIPALESSHALAEVFKRAPRLPKDHLMVVNLSGRGDKDMQTVMHHMQEKLEKHA</sequence>
<name>TRPB_AZOVD</name>
<evidence type="ECO:0000255" key="1">
    <source>
        <dbReference type="HAMAP-Rule" id="MF_00133"/>
    </source>
</evidence>
<proteinExistence type="inferred from homology"/>
<gene>
    <name evidence="1" type="primary">trpB</name>
    <name type="ordered locus">Avin_02120</name>
</gene>
<reference key="1">
    <citation type="journal article" date="2009" name="J. Bacteriol.">
        <title>Genome sequence of Azotobacter vinelandii, an obligate aerobe specialized to support diverse anaerobic metabolic processes.</title>
        <authorList>
            <person name="Setubal J.C."/>
            <person name="Dos Santos P."/>
            <person name="Goldman B.S."/>
            <person name="Ertesvaag H."/>
            <person name="Espin G."/>
            <person name="Rubio L.M."/>
            <person name="Valla S."/>
            <person name="Almeida N.F."/>
            <person name="Balasubramanian D."/>
            <person name="Cromes L."/>
            <person name="Curatti L."/>
            <person name="Du Z."/>
            <person name="Godsy E."/>
            <person name="Goodner B."/>
            <person name="Hellner-Burris K."/>
            <person name="Hernandez J.A."/>
            <person name="Houmiel K."/>
            <person name="Imperial J."/>
            <person name="Kennedy C."/>
            <person name="Larson T.J."/>
            <person name="Latreille P."/>
            <person name="Ligon L.S."/>
            <person name="Lu J."/>
            <person name="Maerk M."/>
            <person name="Miller N.M."/>
            <person name="Norton S."/>
            <person name="O'Carroll I.P."/>
            <person name="Paulsen I."/>
            <person name="Raulfs E.C."/>
            <person name="Roemer R."/>
            <person name="Rosser J."/>
            <person name="Segura D."/>
            <person name="Slater S."/>
            <person name="Stricklin S.L."/>
            <person name="Studholme D.J."/>
            <person name="Sun J."/>
            <person name="Viana C.J."/>
            <person name="Wallin E."/>
            <person name="Wang B."/>
            <person name="Wheeler C."/>
            <person name="Zhu H."/>
            <person name="Dean D.R."/>
            <person name="Dixon R."/>
            <person name="Wood D."/>
        </authorList>
    </citation>
    <scope>NUCLEOTIDE SEQUENCE [LARGE SCALE GENOMIC DNA]</scope>
    <source>
        <strain>DJ / ATCC BAA-1303</strain>
    </source>
</reference>
<comment type="function">
    <text evidence="1">The beta subunit is responsible for the synthesis of L-tryptophan from indole and L-serine.</text>
</comment>
<comment type="catalytic activity">
    <reaction evidence="1">
        <text>(1S,2R)-1-C-(indol-3-yl)glycerol 3-phosphate + L-serine = D-glyceraldehyde 3-phosphate + L-tryptophan + H2O</text>
        <dbReference type="Rhea" id="RHEA:10532"/>
        <dbReference type="ChEBI" id="CHEBI:15377"/>
        <dbReference type="ChEBI" id="CHEBI:33384"/>
        <dbReference type="ChEBI" id="CHEBI:57912"/>
        <dbReference type="ChEBI" id="CHEBI:58866"/>
        <dbReference type="ChEBI" id="CHEBI:59776"/>
        <dbReference type="EC" id="4.2.1.20"/>
    </reaction>
</comment>
<comment type="cofactor">
    <cofactor evidence="1">
        <name>pyridoxal 5'-phosphate</name>
        <dbReference type="ChEBI" id="CHEBI:597326"/>
    </cofactor>
</comment>
<comment type="pathway">
    <text evidence="1">Amino-acid biosynthesis; L-tryptophan biosynthesis; L-tryptophan from chorismate: step 5/5.</text>
</comment>
<comment type="subunit">
    <text evidence="1">Tetramer of two alpha and two beta chains.</text>
</comment>
<comment type="similarity">
    <text evidence="1">Belongs to the TrpB family.</text>
</comment>
<organism>
    <name type="scientific">Azotobacter vinelandii (strain DJ / ATCC BAA-1303)</name>
    <dbReference type="NCBI Taxonomy" id="322710"/>
    <lineage>
        <taxon>Bacteria</taxon>
        <taxon>Pseudomonadati</taxon>
        <taxon>Pseudomonadota</taxon>
        <taxon>Gammaproteobacteria</taxon>
        <taxon>Pseudomonadales</taxon>
        <taxon>Pseudomonadaceae</taxon>
        <taxon>Azotobacter</taxon>
    </lineage>
</organism>
<accession>C1DH66</accession>
<protein>
    <recommendedName>
        <fullName evidence="1">Tryptophan synthase beta chain</fullName>
        <ecNumber evidence="1">4.2.1.20</ecNumber>
    </recommendedName>
</protein>
<keyword id="KW-0028">Amino-acid biosynthesis</keyword>
<keyword id="KW-0057">Aromatic amino acid biosynthesis</keyword>
<keyword id="KW-0456">Lyase</keyword>
<keyword id="KW-0663">Pyridoxal phosphate</keyword>
<keyword id="KW-0822">Tryptophan biosynthesis</keyword>
<dbReference type="EC" id="4.2.1.20" evidence="1"/>
<dbReference type="EMBL" id="CP001157">
    <property type="protein sequence ID" value="ACO76473.1"/>
    <property type="molecule type" value="Genomic_DNA"/>
</dbReference>
<dbReference type="RefSeq" id="WP_012698901.1">
    <property type="nucleotide sequence ID" value="NC_012560.1"/>
</dbReference>
<dbReference type="SMR" id="C1DH66"/>
<dbReference type="STRING" id="322710.Avin_02120"/>
<dbReference type="EnsemblBacteria" id="ACO76473">
    <property type="protein sequence ID" value="ACO76473"/>
    <property type="gene ID" value="Avin_02120"/>
</dbReference>
<dbReference type="GeneID" id="88183678"/>
<dbReference type="KEGG" id="avn:Avin_02120"/>
<dbReference type="eggNOG" id="COG0133">
    <property type="taxonomic scope" value="Bacteria"/>
</dbReference>
<dbReference type="HOGENOM" id="CLU_016734_3_1_6"/>
<dbReference type="OrthoDB" id="9766131at2"/>
<dbReference type="UniPathway" id="UPA00035">
    <property type="reaction ID" value="UER00044"/>
</dbReference>
<dbReference type="Proteomes" id="UP000002424">
    <property type="component" value="Chromosome"/>
</dbReference>
<dbReference type="GO" id="GO:0005737">
    <property type="term" value="C:cytoplasm"/>
    <property type="evidence" value="ECO:0007669"/>
    <property type="project" value="TreeGrafter"/>
</dbReference>
<dbReference type="GO" id="GO:0004834">
    <property type="term" value="F:tryptophan synthase activity"/>
    <property type="evidence" value="ECO:0007669"/>
    <property type="project" value="UniProtKB-UniRule"/>
</dbReference>
<dbReference type="CDD" id="cd06446">
    <property type="entry name" value="Trp-synth_B"/>
    <property type="match status" value="1"/>
</dbReference>
<dbReference type="FunFam" id="3.40.50.1100:FF:000001">
    <property type="entry name" value="Tryptophan synthase beta chain"/>
    <property type="match status" value="1"/>
</dbReference>
<dbReference type="FunFam" id="3.40.50.1100:FF:000004">
    <property type="entry name" value="Tryptophan synthase beta chain"/>
    <property type="match status" value="1"/>
</dbReference>
<dbReference type="Gene3D" id="3.40.50.1100">
    <property type="match status" value="2"/>
</dbReference>
<dbReference type="HAMAP" id="MF_00133">
    <property type="entry name" value="Trp_synth_beta"/>
    <property type="match status" value="1"/>
</dbReference>
<dbReference type="InterPro" id="IPR006653">
    <property type="entry name" value="Trp_synth_b_CS"/>
</dbReference>
<dbReference type="InterPro" id="IPR006654">
    <property type="entry name" value="Trp_synth_beta"/>
</dbReference>
<dbReference type="InterPro" id="IPR023026">
    <property type="entry name" value="Trp_synth_beta/beta-like"/>
</dbReference>
<dbReference type="InterPro" id="IPR001926">
    <property type="entry name" value="TrpB-like_PALP"/>
</dbReference>
<dbReference type="InterPro" id="IPR036052">
    <property type="entry name" value="TrpB-like_PALP_sf"/>
</dbReference>
<dbReference type="NCBIfam" id="TIGR00263">
    <property type="entry name" value="trpB"/>
    <property type="match status" value="1"/>
</dbReference>
<dbReference type="PANTHER" id="PTHR48077:SF3">
    <property type="entry name" value="TRYPTOPHAN SYNTHASE"/>
    <property type="match status" value="1"/>
</dbReference>
<dbReference type="PANTHER" id="PTHR48077">
    <property type="entry name" value="TRYPTOPHAN SYNTHASE-RELATED"/>
    <property type="match status" value="1"/>
</dbReference>
<dbReference type="Pfam" id="PF00291">
    <property type="entry name" value="PALP"/>
    <property type="match status" value="1"/>
</dbReference>
<dbReference type="PIRSF" id="PIRSF001413">
    <property type="entry name" value="Trp_syn_beta"/>
    <property type="match status" value="1"/>
</dbReference>
<dbReference type="SUPFAM" id="SSF53686">
    <property type="entry name" value="Tryptophan synthase beta subunit-like PLP-dependent enzymes"/>
    <property type="match status" value="1"/>
</dbReference>
<dbReference type="PROSITE" id="PS00168">
    <property type="entry name" value="TRP_SYNTHASE_BETA"/>
    <property type="match status" value="1"/>
</dbReference>